<dbReference type="EMBL" id="L22858">
    <property type="protein sequence ID" value="AAA66770.1"/>
    <property type="molecule type" value="Genomic_DNA"/>
</dbReference>
<dbReference type="PIR" id="E72867">
    <property type="entry name" value="E72867"/>
</dbReference>
<dbReference type="RefSeq" id="NP_054170.1">
    <property type="nucleotide sequence ID" value="NC_001623.1"/>
</dbReference>
<dbReference type="GeneID" id="1403973"/>
<dbReference type="KEGG" id="vg:1403973"/>
<dbReference type="Proteomes" id="UP000008292">
    <property type="component" value="Segment"/>
</dbReference>
<accession>P41699</accession>
<name>Y140_NPVAC</name>
<reference key="1">
    <citation type="journal article" date="1994" name="Virology">
        <title>The complete DNA sequence of Autographa californica nuclear polyhedrosis virus.</title>
        <authorList>
            <person name="Ayres M.D."/>
            <person name="Howard S.C."/>
            <person name="Kuzio J."/>
            <person name="Lopez-Ferber M."/>
            <person name="Possee R.D."/>
        </authorList>
    </citation>
    <scope>NUCLEOTIDE SEQUENCE [LARGE SCALE GENOMIC DNA]</scope>
    <source>
        <strain>C6</strain>
    </source>
</reference>
<feature type="chain" id="PRO_0000133066" description="Uncharacterized 7.1 kDa protein in ME53-IE0 intergenic region">
    <location>
        <begin position="1"/>
        <end position="60"/>
    </location>
</feature>
<keyword id="KW-1185">Reference proteome</keyword>
<organism>
    <name type="scientific">Autographa californica nuclear polyhedrosis virus</name>
    <name type="common">AcMNPV</name>
    <dbReference type="NCBI Taxonomy" id="46015"/>
    <lineage>
        <taxon>Viruses</taxon>
        <taxon>Viruses incertae sedis</taxon>
        <taxon>Naldaviricetes</taxon>
        <taxon>Lefavirales</taxon>
        <taxon>Baculoviridae</taxon>
        <taxon>Alphabaculovirus</taxon>
        <taxon>Alphabaculovirus aucalifornicae</taxon>
    </lineage>
</organism>
<protein>
    <recommendedName>
        <fullName>Uncharacterized 7.1 kDa protein in ME53-IE0 intergenic region</fullName>
    </recommendedName>
</protein>
<sequence>METLSIEIRLYMRRRAWSRRHFAHGTRAVEGTGYIKPVCPTRKSVSIVLRRTRSLARRIV</sequence>
<organismHost>
    <name type="scientific">Lepidoptera</name>
    <name type="common">butterflies and moths</name>
    <dbReference type="NCBI Taxonomy" id="7088"/>
</organismHost>
<proteinExistence type="predicted"/>